<keyword id="KW-0067">ATP-binding</keyword>
<keyword id="KW-0143">Chaperone</keyword>
<keyword id="KW-0963">Cytoplasm</keyword>
<keyword id="KW-0547">Nucleotide-binding</keyword>
<keyword id="KW-1185">Reference proteome</keyword>
<organism>
    <name type="scientific">Vibrio cholerae serotype O1 (strain ATCC 39315 / El Tor Inaba N16961)</name>
    <dbReference type="NCBI Taxonomy" id="243277"/>
    <lineage>
        <taxon>Bacteria</taxon>
        <taxon>Pseudomonadati</taxon>
        <taxon>Pseudomonadota</taxon>
        <taxon>Gammaproteobacteria</taxon>
        <taxon>Vibrionales</taxon>
        <taxon>Vibrionaceae</taxon>
        <taxon>Vibrio</taxon>
    </lineage>
</organism>
<protein>
    <recommendedName>
        <fullName evidence="1">ATP-dependent protease ATPase subunit HslU</fullName>
    </recommendedName>
    <alternativeName>
        <fullName evidence="1">Unfoldase HslU</fullName>
    </alternativeName>
</protein>
<reference key="1">
    <citation type="journal article" date="2000" name="Nature">
        <title>DNA sequence of both chromosomes of the cholera pathogen Vibrio cholerae.</title>
        <authorList>
            <person name="Heidelberg J.F."/>
            <person name="Eisen J.A."/>
            <person name="Nelson W.C."/>
            <person name="Clayton R.A."/>
            <person name="Gwinn M.L."/>
            <person name="Dodson R.J."/>
            <person name="Haft D.H."/>
            <person name="Hickey E.K."/>
            <person name="Peterson J.D."/>
            <person name="Umayam L.A."/>
            <person name="Gill S.R."/>
            <person name="Nelson K.E."/>
            <person name="Read T.D."/>
            <person name="Tettelin H."/>
            <person name="Richardson D.L."/>
            <person name="Ermolaeva M.D."/>
            <person name="Vamathevan J.J."/>
            <person name="Bass S."/>
            <person name="Qin H."/>
            <person name="Dragoi I."/>
            <person name="Sellers P."/>
            <person name="McDonald L.A."/>
            <person name="Utterback T.R."/>
            <person name="Fleischmann R.D."/>
            <person name="Nierman W.C."/>
            <person name="White O."/>
            <person name="Salzberg S.L."/>
            <person name="Smith H.O."/>
            <person name="Colwell R.R."/>
            <person name="Mekalanos J.J."/>
            <person name="Venter J.C."/>
            <person name="Fraser C.M."/>
        </authorList>
    </citation>
    <scope>NUCLEOTIDE SEQUENCE [LARGE SCALE GENOMIC DNA]</scope>
    <source>
        <strain>ATCC 39315 / El Tor Inaba N16961</strain>
    </source>
</reference>
<accession>Q9KNQ7</accession>
<comment type="function">
    <text evidence="1">ATPase subunit of a proteasome-like degradation complex; this subunit has chaperone activity. The binding of ATP and its subsequent hydrolysis by HslU are essential for unfolding of protein substrates subsequently hydrolyzed by HslV. HslU recognizes the N-terminal part of its protein substrates and unfolds these before they are guided to HslV for hydrolysis.</text>
</comment>
<comment type="subunit">
    <text evidence="1">A double ring-shaped homohexamer of HslV is capped on each side by a ring-shaped HslU homohexamer. The assembly of the HslU/HslV complex is dependent on binding of ATP.</text>
</comment>
<comment type="subcellular location">
    <subcellularLocation>
        <location evidence="1">Cytoplasm</location>
    </subcellularLocation>
</comment>
<comment type="similarity">
    <text evidence="1">Belongs to the ClpX chaperone family. HslU subfamily.</text>
</comment>
<sequence>MSEMTPREIVSELNRHIIGQDKAKRAVAIALRNRWRRMQLEESLRVEVTPKNILMIGPTGVGKTEIARRLAKLANVPFIKVEATKFTEVGYVGKEVESIIRDLTDVAVKLTHQQAMEKVKFRAEELAEERVLDALLPPPRDAWGQAEQKEENSSTRQVFRKKLREGQLNDKEIEINVAVPQMGVEIMAPPGMEEMTNQLQGLFQNLAGDTKKKRKMKIKDALKALVEEEAAKLVNQEELKEQAIYNVENNGIVFIDEIDKICKRGEVSGPDVSREGVQRDLLPLIEGSTVSTKHGMVRTDHILFIASGAFQVAKPSDLIPELQGRLPIRVELEALSSNDFKRILTEPKASLTEQYVALMKTEQVDVQFTEDGIKQIADAAWQVNETTENIGARRLHTVLERLMDEISFDATEKAGQAFVIDAAYVKARLGELVEDEDLSRFIL</sequence>
<feature type="chain" id="PRO_0000160558" description="ATP-dependent protease ATPase subunit HslU">
    <location>
        <begin position="1"/>
        <end position="443"/>
    </location>
</feature>
<feature type="binding site" evidence="1">
    <location>
        <position position="18"/>
    </location>
    <ligand>
        <name>ATP</name>
        <dbReference type="ChEBI" id="CHEBI:30616"/>
    </ligand>
</feature>
<feature type="binding site" evidence="1">
    <location>
        <begin position="60"/>
        <end position="65"/>
    </location>
    <ligand>
        <name>ATP</name>
        <dbReference type="ChEBI" id="CHEBI:30616"/>
    </ligand>
</feature>
<feature type="binding site" evidence="1">
    <location>
        <position position="256"/>
    </location>
    <ligand>
        <name>ATP</name>
        <dbReference type="ChEBI" id="CHEBI:30616"/>
    </ligand>
</feature>
<feature type="binding site" evidence="1">
    <location>
        <position position="321"/>
    </location>
    <ligand>
        <name>ATP</name>
        <dbReference type="ChEBI" id="CHEBI:30616"/>
    </ligand>
</feature>
<feature type="binding site" evidence="1">
    <location>
        <position position="393"/>
    </location>
    <ligand>
        <name>ATP</name>
        <dbReference type="ChEBI" id="CHEBI:30616"/>
    </ligand>
</feature>
<gene>
    <name evidence="1" type="primary">hslU</name>
    <name type="ordered locus">VC_2674</name>
</gene>
<evidence type="ECO:0000255" key="1">
    <source>
        <dbReference type="HAMAP-Rule" id="MF_00249"/>
    </source>
</evidence>
<name>HSLU_VIBCH</name>
<dbReference type="EMBL" id="AE003852">
    <property type="protein sequence ID" value="AAF95815.1"/>
    <property type="molecule type" value="Genomic_DNA"/>
</dbReference>
<dbReference type="PIR" id="E82046">
    <property type="entry name" value="E82046"/>
</dbReference>
<dbReference type="RefSeq" id="NP_232302.1">
    <property type="nucleotide sequence ID" value="NC_002505.1"/>
</dbReference>
<dbReference type="RefSeq" id="WP_001293370.1">
    <property type="nucleotide sequence ID" value="NZ_LT906614.1"/>
</dbReference>
<dbReference type="SMR" id="Q9KNQ7"/>
<dbReference type="STRING" id="243277.VC_2674"/>
<dbReference type="DNASU" id="2615502"/>
<dbReference type="EnsemblBacteria" id="AAF95815">
    <property type="protein sequence ID" value="AAF95815"/>
    <property type="gene ID" value="VC_2674"/>
</dbReference>
<dbReference type="KEGG" id="vch:VC_2674"/>
<dbReference type="PATRIC" id="fig|243277.26.peg.2549"/>
<dbReference type="eggNOG" id="COG1220">
    <property type="taxonomic scope" value="Bacteria"/>
</dbReference>
<dbReference type="HOGENOM" id="CLU_033123_0_0_6"/>
<dbReference type="Proteomes" id="UP000000584">
    <property type="component" value="Chromosome 1"/>
</dbReference>
<dbReference type="GO" id="GO:0009376">
    <property type="term" value="C:HslUV protease complex"/>
    <property type="evidence" value="ECO:0000318"/>
    <property type="project" value="GO_Central"/>
</dbReference>
<dbReference type="GO" id="GO:0005524">
    <property type="term" value="F:ATP binding"/>
    <property type="evidence" value="ECO:0000318"/>
    <property type="project" value="GO_Central"/>
</dbReference>
<dbReference type="GO" id="GO:0016887">
    <property type="term" value="F:ATP hydrolysis activity"/>
    <property type="evidence" value="ECO:0000318"/>
    <property type="project" value="GO_Central"/>
</dbReference>
<dbReference type="GO" id="GO:0008233">
    <property type="term" value="F:peptidase activity"/>
    <property type="evidence" value="ECO:0007669"/>
    <property type="project" value="InterPro"/>
</dbReference>
<dbReference type="GO" id="GO:0036402">
    <property type="term" value="F:proteasome-activating activity"/>
    <property type="evidence" value="ECO:0007669"/>
    <property type="project" value="UniProtKB-UniRule"/>
</dbReference>
<dbReference type="GO" id="GO:0043335">
    <property type="term" value="P:protein unfolding"/>
    <property type="evidence" value="ECO:0007669"/>
    <property type="project" value="UniProtKB-UniRule"/>
</dbReference>
<dbReference type="GO" id="GO:0051603">
    <property type="term" value="P:proteolysis involved in protein catabolic process"/>
    <property type="evidence" value="ECO:0000318"/>
    <property type="project" value="GO_Central"/>
</dbReference>
<dbReference type="CDD" id="cd19498">
    <property type="entry name" value="RecA-like_HslU"/>
    <property type="match status" value="1"/>
</dbReference>
<dbReference type="FunFam" id="1.10.8.10:FF:000028">
    <property type="entry name" value="ATP-dependent protease ATPase subunit HslU"/>
    <property type="match status" value="1"/>
</dbReference>
<dbReference type="FunFam" id="1.10.8.60:FF:000027">
    <property type="entry name" value="ATP-dependent protease ATPase subunit HslU"/>
    <property type="match status" value="1"/>
</dbReference>
<dbReference type="FunFam" id="3.40.50.300:FF:000213">
    <property type="entry name" value="ATP-dependent protease ATPase subunit HslU"/>
    <property type="match status" value="1"/>
</dbReference>
<dbReference type="FunFam" id="3.40.50.300:FF:000220">
    <property type="entry name" value="ATP-dependent protease ATPase subunit HslU"/>
    <property type="match status" value="1"/>
</dbReference>
<dbReference type="Gene3D" id="1.10.8.60">
    <property type="match status" value="1"/>
</dbReference>
<dbReference type="Gene3D" id="3.40.50.300">
    <property type="entry name" value="P-loop containing nucleotide triphosphate hydrolases"/>
    <property type="match status" value="2"/>
</dbReference>
<dbReference type="HAMAP" id="MF_00249">
    <property type="entry name" value="HslU"/>
    <property type="match status" value="1"/>
</dbReference>
<dbReference type="InterPro" id="IPR003593">
    <property type="entry name" value="AAA+_ATPase"/>
</dbReference>
<dbReference type="InterPro" id="IPR050052">
    <property type="entry name" value="ATP-dep_Clp_protease_ClpX"/>
</dbReference>
<dbReference type="InterPro" id="IPR003959">
    <property type="entry name" value="ATPase_AAA_core"/>
</dbReference>
<dbReference type="InterPro" id="IPR019489">
    <property type="entry name" value="Clp_ATPase_C"/>
</dbReference>
<dbReference type="InterPro" id="IPR004491">
    <property type="entry name" value="HslU"/>
</dbReference>
<dbReference type="InterPro" id="IPR027417">
    <property type="entry name" value="P-loop_NTPase"/>
</dbReference>
<dbReference type="NCBIfam" id="TIGR00390">
    <property type="entry name" value="hslU"/>
    <property type="match status" value="1"/>
</dbReference>
<dbReference type="NCBIfam" id="NF003544">
    <property type="entry name" value="PRK05201.1"/>
    <property type="match status" value="1"/>
</dbReference>
<dbReference type="PANTHER" id="PTHR48102">
    <property type="entry name" value="ATP-DEPENDENT CLP PROTEASE ATP-BINDING SUBUNIT CLPX-LIKE, MITOCHONDRIAL-RELATED"/>
    <property type="match status" value="1"/>
</dbReference>
<dbReference type="PANTHER" id="PTHR48102:SF3">
    <property type="entry name" value="ATP-DEPENDENT PROTEASE ATPASE SUBUNIT HSLU"/>
    <property type="match status" value="1"/>
</dbReference>
<dbReference type="Pfam" id="PF00004">
    <property type="entry name" value="AAA"/>
    <property type="match status" value="1"/>
</dbReference>
<dbReference type="Pfam" id="PF07724">
    <property type="entry name" value="AAA_2"/>
    <property type="match status" value="1"/>
</dbReference>
<dbReference type="SMART" id="SM00382">
    <property type="entry name" value="AAA"/>
    <property type="match status" value="1"/>
</dbReference>
<dbReference type="SMART" id="SM01086">
    <property type="entry name" value="ClpB_D2-small"/>
    <property type="match status" value="1"/>
</dbReference>
<dbReference type="SUPFAM" id="SSF52540">
    <property type="entry name" value="P-loop containing nucleoside triphosphate hydrolases"/>
    <property type="match status" value="1"/>
</dbReference>
<proteinExistence type="inferred from homology"/>